<name>1433B_HORVU</name>
<comment type="induction">
    <text>In response to penetration attempts of powdery mildew fungi.</text>
</comment>
<comment type="similarity">
    <text evidence="1">Belongs to the 14-3-3 family.</text>
</comment>
<proteinExistence type="evidence at transcript level"/>
<sequence>MAQPAELSREENVYMAKLAEQAERYEEMVEFMEKVAKTVDSEELTVEERNLLSVAYKNVIGARRASWRIISSIEQKEESRGNEDRVTLIKDYRGKIEVELTKICDGILKLLDSHLVPSSTAPESKVFYLKMKGDYYRYLAEFKSGTERKDAAENTMVAYKAAQEIALAELPPTHPIRLGLALNFSVFYYEILNSPDRACDLAKQAFDEAISELDSLSEESYKDSTLIMQLLRDNLTLWTSDISEDAAEEMKDAPKGESGDGQ</sequence>
<accession>Q43470</accession>
<evidence type="ECO:0000305" key="1"/>
<feature type="chain" id="PRO_0000058679" description="14-3-3-like protein B">
    <location>
        <begin position="1"/>
        <end position="262"/>
    </location>
</feature>
<organism>
    <name type="scientific">Hordeum vulgare</name>
    <name type="common">Barley</name>
    <dbReference type="NCBI Taxonomy" id="4513"/>
    <lineage>
        <taxon>Eukaryota</taxon>
        <taxon>Viridiplantae</taxon>
        <taxon>Streptophyta</taxon>
        <taxon>Embryophyta</taxon>
        <taxon>Tracheophyta</taxon>
        <taxon>Spermatophyta</taxon>
        <taxon>Magnoliopsida</taxon>
        <taxon>Liliopsida</taxon>
        <taxon>Poales</taxon>
        <taxon>Poaceae</taxon>
        <taxon>BOP clade</taxon>
        <taxon>Pooideae</taxon>
        <taxon>Triticodae</taxon>
        <taxon>Triticeae</taxon>
        <taxon>Hordeinae</taxon>
        <taxon>Hordeum</taxon>
    </lineage>
</organism>
<dbReference type="EMBL" id="X93170">
    <property type="protein sequence ID" value="CAA63658.1"/>
    <property type="molecule type" value="mRNA"/>
</dbReference>
<dbReference type="PIR" id="T04406">
    <property type="entry name" value="T04406"/>
</dbReference>
<dbReference type="SMR" id="Q43470"/>
<dbReference type="ExpressionAtlas" id="Q43470">
    <property type="expression patterns" value="baseline and differential"/>
</dbReference>
<dbReference type="FunFam" id="1.20.190.20:FF:000002">
    <property type="entry name" value="14-3-3 protein epsilon"/>
    <property type="match status" value="1"/>
</dbReference>
<dbReference type="Gene3D" id="1.20.190.20">
    <property type="entry name" value="14-3-3 domain"/>
    <property type="match status" value="1"/>
</dbReference>
<dbReference type="InterPro" id="IPR000308">
    <property type="entry name" value="14-3-3"/>
</dbReference>
<dbReference type="InterPro" id="IPR023409">
    <property type="entry name" value="14-3-3_CS"/>
</dbReference>
<dbReference type="InterPro" id="IPR036815">
    <property type="entry name" value="14-3-3_dom_sf"/>
</dbReference>
<dbReference type="InterPro" id="IPR023410">
    <property type="entry name" value="14-3-3_domain"/>
</dbReference>
<dbReference type="PANTHER" id="PTHR18860">
    <property type="entry name" value="14-3-3 PROTEIN"/>
    <property type="match status" value="1"/>
</dbReference>
<dbReference type="Pfam" id="PF00244">
    <property type="entry name" value="14-3-3"/>
    <property type="match status" value="1"/>
</dbReference>
<dbReference type="PIRSF" id="PIRSF000868">
    <property type="entry name" value="14-3-3"/>
    <property type="match status" value="1"/>
</dbReference>
<dbReference type="PRINTS" id="PR00305">
    <property type="entry name" value="1433ZETA"/>
</dbReference>
<dbReference type="SMART" id="SM00101">
    <property type="entry name" value="14_3_3"/>
    <property type="match status" value="1"/>
</dbReference>
<dbReference type="SUPFAM" id="SSF48445">
    <property type="entry name" value="14-3-3 protein"/>
    <property type="match status" value="1"/>
</dbReference>
<dbReference type="PROSITE" id="PS00796">
    <property type="entry name" value="1433_1"/>
    <property type="match status" value="1"/>
</dbReference>
<dbReference type="PROSITE" id="PS00797">
    <property type="entry name" value="1433_2"/>
    <property type="match status" value="1"/>
</dbReference>
<reference key="1">
    <citation type="submission" date="1995-11" db="EMBL/GenBank/DDBJ databases">
        <title>A cDNA for a 14-3-3b protein expressed in Barley leaves.</title>
        <authorList>
            <person name="Thordal-Christensen H."/>
            <person name="Brandt J.M."/>
            <person name="Collinge D.B."/>
        </authorList>
    </citation>
    <scope>NUCLEOTIDE SEQUENCE [MRNA]</scope>
    <source>
        <strain>cv. Pallas</strain>
        <tissue>Leaf</tissue>
    </source>
</reference>
<protein>
    <recommendedName>
        <fullName>14-3-3-like protein B</fullName>
        <shortName>14-3-3B</shortName>
    </recommendedName>
</protein>